<gene>
    <name evidence="5" type="primary">REP</name>
    <name evidence="9" type="ordered locus">At3g06540</name>
    <name evidence="10" type="ORF">F5E6.13</name>
</gene>
<evidence type="ECO:0000256" key="1">
    <source>
        <dbReference type="SAM" id="MobiDB-lite"/>
    </source>
</evidence>
<evidence type="ECO:0000269" key="2">
    <source>
    </source>
</evidence>
<evidence type="ECO:0000269" key="3">
    <source>
    </source>
</evidence>
<evidence type="ECO:0000269" key="4">
    <source>
    </source>
</evidence>
<evidence type="ECO:0000303" key="5">
    <source>
    </source>
</evidence>
<evidence type="ECO:0000305" key="6"/>
<evidence type="ECO:0000305" key="7">
    <source>
    </source>
</evidence>
<evidence type="ECO:0000305" key="8">
    <source>
    </source>
</evidence>
<evidence type="ECO:0000312" key="9">
    <source>
        <dbReference type="Araport" id="AT3G06540"/>
    </source>
</evidence>
<evidence type="ECO:0000312" key="10">
    <source>
        <dbReference type="EMBL" id="AAG51329.1"/>
    </source>
</evidence>
<comment type="function">
    <text evidence="2 7 8">Substrate-binding subunit of the Rab geranylgeranyltransferase (GGTase) complex. Binds unprenylated Rab proteins and presents the substrate peptide to the catalytic component composed of the alpha subunit RGTA and the beta subunit RGTB (Probable). Preferentially binds the GDP-bound form of Rab and stimulates geranylgeranylation of various Rab GTPases in vitro (PubMed:15854662).</text>
</comment>
<comment type="subunit">
    <text evidence="4">Heterotrimer composed of the alpha subunit RGTA, the beta subunit RGTB and REP; within this trimer, RGTA and RGTB form the catalytic component, while REP mediates peptide substrate binding.</text>
</comment>
<comment type="subcellular location">
    <subcellularLocation>
        <location evidence="2">Cytoplasm</location>
    </subcellularLocation>
</comment>
<comment type="tissue specificity">
    <text evidence="3">Expressed in roots, leaves and flowers.</text>
</comment>
<comment type="similarity">
    <text evidence="6">Belongs to the Rab GDI family.</text>
</comment>
<comment type="sequence caution" evidence="6">
    <conflict type="erroneous gene model prediction">
        <sequence resource="EMBL-CDS" id="AAG51329"/>
    </conflict>
</comment>
<protein>
    <recommendedName>
        <fullName evidence="6">Rab escort protein 1</fullName>
        <shortName evidence="5">AthREP</shortName>
    </recommendedName>
</protein>
<organism>
    <name type="scientific">Arabidopsis thaliana</name>
    <name type="common">Mouse-ear cress</name>
    <dbReference type="NCBI Taxonomy" id="3702"/>
    <lineage>
        <taxon>Eukaryota</taxon>
        <taxon>Viridiplantae</taxon>
        <taxon>Streptophyta</taxon>
        <taxon>Embryophyta</taxon>
        <taxon>Tracheophyta</taxon>
        <taxon>Spermatophyta</taxon>
        <taxon>Magnoliopsida</taxon>
        <taxon>eudicotyledons</taxon>
        <taxon>Gunneridae</taxon>
        <taxon>Pentapetalae</taxon>
        <taxon>rosids</taxon>
        <taxon>malvids</taxon>
        <taxon>Brassicales</taxon>
        <taxon>Brassicaceae</taxon>
        <taxon>Camelineae</taxon>
        <taxon>Arabidopsis</taxon>
    </lineage>
</organism>
<name>REP_ARATH</name>
<dbReference type="EMBL" id="AF409086">
    <property type="protein sequence ID" value="AAN03631.2"/>
    <property type="molecule type" value="mRNA"/>
</dbReference>
<dbReference type="EMBL" id="AC020580">
    <property type="protein sequence ID" value="AAG51329.1"/>
    <property type="status" value="ALT_SEQ"/>
    <property type="molecule type" value="Genomic_DNA"/>
</dbReference>
<dbReference type="EMBL" id="CP002686">
    <property type="protein sequence ID" value="AEE74410.1"/>
    <property type="molecule type" value="Genomic_DNA"/>
</dbReference>
<dbReference type="EMBL" id="AY094486">
    <property type="protein sequence ID" value="AAM19852.1"/>
    <property type="molecule type" value="mRNA"/>
</dbReference>
<dbReference type="EMBL" id="BT000837">
    <property type="protein sequence ID" value="AAN33212.1"/>
    <property type="molecule type" value="mRNA"/>
</dbReference>
<dbReference type="RefSeq" id="NP_187306.2">
    <property type="nucleotide sequence ID" value="NM_111530.4"/>
</dbReference>
<dbReference type="SMR" id="Q8LLD4"/>
<dbReference type="FunCoup" id="Q8LLD4">
    <property type="interactions" value="1697"/>
</dbReference>
<dbReference type="IntAct" id="Q8LLD4">
    <property type="interactions" value="6"/>
</dbReference>
<dbReference type="STRING" id="3702.Q8LLD4"/>
<dbReference type="PaxDb" id="3702-AT3G06540.1"/>
<dbReference type="ProteomicsDB" id="236874"/>
<dbReference type="EnsemblPlants" id="AT3G06540.1">
    <property type="protein sequence ID" value="AT3G06540.1"/>
    <property type="gene ID" value="AT3G06540"/>
</dbReference>
<dbReference type="GeneID" id="819832"/>
<dbReference type="Gramene" id="AT3G06540.1">
    <property type="protein sequence ID" value="AT3G06540.1"/>
    <property type="gene ID" value="AT3G06540"/>
</dbReference>
<dbReference type="KEGG" id="ath:AT3G06540"/>
<dbReference type="Araport" id="AT3G06540"/>
<dbReference type="TAIR" id="AT3G06540">
    <property type="gene designation" value="REP"/>
</dbReference>
<dbReference type="eggNOG" id="KOG4405">
    <property type="taxonomic scope" value="Eukaryota"/>
</dbReference>
<dbReference type="HOGENOM" id="CLU_021695_4_3_1"/>
<dbReference type="InParanoid" id="Q8LLD4"/>
<dbReference type="OMA" id="EHYVLHA"/>
<dbReference type="PhylomeDB" id="Q8LLD4"/>
<dbReference type="PRO" id="PR:Q8LLD4"/>
<dbReference type="Proteomes" id="UP000006548">
    <property type="component" value="Chromosome 3"/>
</dbReference>
<dbReference type="ExpressionAtlas" id="Q8LLD4">
    <property type="expression patterns" value="baseline and differential"/>
</dbReference>
<dbReference type="GO" id="GO:0005737">
    <property type="term" value="C:cytoplasm"/>
    <property type="evidence" value="ECO:0000314"/>
    <property type="project" value="TAIR"/>
</dbReference>
<dbReference type="GO" id="GO:0005968">
    <property type="term" value="C:Rab-protein geranylgeranyltransferase complex"/>
    <property type="evidence" value="ECO:0000314"/>
    <property type="project" value="UniProtKB"/>
</dbReference>
<dbReference type="GO" id="GO:0005092">
    <property type="term" value="F:GDP-dissociation inhibitor activity"/>
    <property type="evidence" value="ECO:0007669"/>
    <property type="project" value="InterPro"/>
</dbReference>
<dbReference type="GO" id="GO:0005096">
    <property type="term" value="F:GTPase activator activity"/>
    <property type="evidence" value="ECO:0007669"/>
    <property type="project" value="UniProtKB-KW"/>
</dbReference>
<dbReference type="GO" id="GO:0004663">
    <property type="term" value="F:Rab geranylgeranyltransferase activity"/>
    <property type="evidence" value="ECO:0000315"/>
    <property type="project" value="TAIR"/>
</dbReference>
<dbReference type="GO" id="GO:0031267">
    <property type="term" value="F:small GTPase binding"/>
    <property type="evidence" value="ECO:0000314"/>
    <property type="project" value="TAIR"/>
</dbReference>
<dbReference type="GO" id="GO:0006886">
    <property type="term" value="P:intracellular protein transport"/>
    <property type="evidence" value="ECO:0007669"/>
    <property type="project" value="InterPro"/>
</dbReference>
<dbReference type="GO" id="GO:0009555">
    <property type="term" value="P:pollen development"/>
    <property type="evidence" value="ECO:0000315"/>
    <property type="project" value="TAIR"/>
</dbReference>
<dbReference type="GO" id="GO:0009846">
    <property type="term" value="P:pollen germination"/>
    <property type="evidence" value="ECO:0000315"/>
    <property type="project" value="TAIR"/>
</dbReference>
<dbReference type="GO" id="GO:0010152">
    <property type="term" value="P:pollen maturation"/>
    <property type="evidence" value="ECO:0000315"/>
    <property type="project" value="TAIR"/>
</dbReference>
<dbReference type="GO" id="GO:0009860">
    <property type="term" value="P:pollen tube growth"/>
    <property type="evidence" value="ECO:0000315"/>
    <property type="project" value="TAIR"/>
</dbReference>
<dbReference type="GO" id="GO:2000541">
    <property type="term" value="P:positive regulation of protein geranylgeranylation"/>
    <property type="evidence" value="ECO:0000314"/>
    <property type="project" value="TAIR"/>
</dbReference>
<dbReference type="GO" id="GO:0007264">
    <property type="term" value="P:small GTPase-mediated signal transduction"/>
    <property type="evidence" value="ECO:0007669"/>
    <property type="project" value="InterPro"/>
</dbReference>
<dbReference type="FunFam" id="1.10.405.10:FF:000008">
    <property type="entry name" value="Rab proteins geranylgeranyltransferase component"/>
    <property type="match status" value="1"/>
</dbReference>
<dbReference type="Gene3D" id="3.50.50.60">
    <property type="entry name" value="FAD/NAD(P)-binding domain"/>
    <property type="match status" value="1"/>
</dbReference>
<dbReference type="Gene3D" id="1.10.405.10">
    <property type="entry name" value="Guanine Nucleotide Dissociation Inhibitor, domain 1"/>
    <property type="match status" value="1"/>
</dbReference>
<dbReference type="Gene3D" id="3.30.519.10">
    <property type="entry name" value="Guanine Nucleotide Dissociation Inhibitor, domain 2"/>
    <property type="match status" value="1"/>
</dbReference>
<dbReference type="InterPro" id="IPR036188">
    <property type="entry name" value="FAD/NAD-bd_sf"/>
</dbReference>
<dbReference type="InterPro" id="IPR018203">
    <property type="entry name" value="GDP_dissociation_inhibitor"/>
</dbReference>
<dbReference type="InterPro" id="IPR017230">
    <property type="entry name" value="Mrs6"/>
</dbReference>
<dbReference type="InterPro" id="IPR001738">
    <property type="entry name" value="Rab_escort"/>
</dbReference>
<dbReference type="PANTHER" id="PTHR11787:SF4">
    <property type="entry name" value="CHM, RAB ESCORT PROTEIN 1"/>
    <property type="match status" value="1"/>
</dbReference>
<dbReference type="PANTHER" id="PTHR11787">
    <property type="entry name" value="RAB GDP-DISSOCIATION INHIBITOR"/>
    <property type="match status" value="1"/>
</dbReference>
<dbReference type="Pfam" id="PF00996">
    <property type="entry name" value="GDI"/>
    <property type="match status" value="2"/>
</dbReference>
<dbReference type="PIRSF" id="PIRSF016550">
    <property type="entry name" value="Rab_ger_ger_transf_A_euk"/>
    <property type="match status" value="1"/>
</dbReference>
<dbReference type="PRINTS" id="PR00891">
    <property type="entry name" value="RABGDIREP"/>
</dbReference>
<dbReference type="PRINTS" id="PR00894">
    <property type="entry name" value="YEASTMRS6P"/>
</dbReference>
<dbReference type="SUPFAM" id="SSF54373">
    <property type="entry name" value="FAD-linked reductases, C-terminal domain"/>
    <property type="match status" value="1"/>
</dbReference>
<dbReference type="SUPFAM" id="SSF51905">
    <property type="entry name" value="FAD/NAD(P)-binding domain"/>
    <property type="match status" value="1"/>
</dbReference>
<proteinExistence type="evidence at protein level"/>
<keyword id="KW-0963">Cytoplasm</keyword>
<keyword id="KW-0343">GTPase activation</keyword>
<keyword id="KW-1185">Reference proteome</keyword>
<sequence length="563" mass="61511">MIDIPPYPPLDPSNYDLIVVGTGVSESVLAAAASSSGSSVLHLDPNPFYGSHFASLSLPDLTSFLHSNSVSPPPSPSSPPLPPSNNHDFISVDLVNRSLYSSVEISSFESEILEEHSRRFNVDLAGPRVVFCADESINLMLKSGANNYVEFKSIDASFVGDSSGELRNVPDSRAAIFKDKSLTLLEKNQLMKFFKLVQSHLASSTEKDDSTTVKISEEDMESPFVDFLSKMRLPPKIKSIILYAIAMLDYDQDNTETCRHLLKTKEGIDRLALYITSMGRFSNALGALIYPIYGQGELPQAFCRRAAVKGCIYVLRMPITALLLDKETGGYKGVRLASGQEIFSQKLILDPCVTVGLESLSSLTDQQNETLSVLVPKSMINKEKIARGVCVIRGSVKANVSNALVVYPPKSLFPEQLTAIRVLQLGSGLAVCPADMHVLYLSTLCDNDDQGIKALLSAMSNLISLPVPENRQSDSVVENDTSETKPILLWRALYVQELVKGEFGGTISSMPSPDGNLNYNEIVESAVKLYEKLMGSEELFKEETSPAENTTEEENDGGVEIED</sequence>
<reference key="1">
    <citation type="journal article" date="2005" name="J. Mol. Biol.">
        <title>A specific feature of the angiosperm Rab escort protein (REP) and evolution of the REP/GDI superfamily.</title>
        <authorList>
            <person name="Hala M."/>
            <person name="Elias M."/>
            <person name="Zarsky V."/>
        </authorList>
    </citation>
    <scope>NUCLEOTIDE SEQUENCE [MRNA]</scope>
    <scope>FUNCTION</scope>
    <scope>SUBCELLULAR LOCATION</scope>
    <source>
        <strain>cv. Columbia</strain>
    </source>
</reference>
<reference key="2">
    <citation type="journal article" date="2000" name="Nature">
        <title>Sequence and analysis of chromosome 3 of the plant Arabidopsis thaliana.</title>
        <authorList>
            <person name="Salanoubat M."/>
            <person name="Lemcke K."/>
            <person name="Rieger M."/>
            <person name="Ansorge W."/>
            <person name="Unseld M."/>
            <person name="Fartmann B."/>
            <person name="Valle G."/>
            <person name="Bloecker H."/>
            <person name="Perez-Alonso M."/>
            <person name="Obermaier B."/>
            <person name="Delseny M."/>
            <person name="Boutry M."/>
            <person name="Grivell L.A."/>
            <person name="Mache R."/>
            <person name="Puigdomenech P."/>
            <person name="De Simone V."/>
            <person name="Choisne N."/>
            <person name="Artiguenave F."/>
            <person name="Robert C."/>
            <person name="Brottier P."/>
            <person name="Wincker P."/>
            <person name="Cattolico L."/>
            <person name="Weissenbach J."/>
            <person name="Saurin W."/>
            <person name="Quetier F."/>
            <person name="Schaefer M."/>
            <person name="Mueller-Auer S."/>
            <person name="Gabel C."/>
            <person name="Fuchs M."/>
            <person name="Benes V."/>
            <person name="Wurmbach E."/>
            <person name="Drzonek H."/>
            <person name="Erfle H."/>
            <person name="Jordan N."/>
            <person name="Bangert S."/>
            <person name="Wiedelmann R."/>
            <person name="Kranz H."/>
            <person name="Voss H."/>
            <person name="Holland R."/>
            <person name="Brandt P."/>
            <person name="Nyakatura G."/>
            <person name="Vezzi A."/>
            <person name="D'Angelo M."/>
            <person name="Pallavicini A."/>
            <person name="Toppo S."/>
            <person name="Simionati B."/>
            <person name="Conrad A."/>
            <person name="Hornischer K."/>
            <person name="Kauer G."/>
            <person name="Loehnert T.-H."/>
            <person name="Nordsiek G."/>
            <person name="Reichelt J."/>
            <person name="Scharfe M."/>
            <person name="Schoen O."/>
            <person name="Bargues M."/>
            <person name="Terol J."/>
            <person name="Climent J."/>
            <person name="Navarro P."/>
            <person name="Collado C."/>
            <person name="Perez-Perez A."/>
            <person name="Ottenwaelder B."/>
            <person name="Duchemin D."/>
            <person name="Cooke R."/>
            <person name="Laudie M."/>
            <person name="Berger-Llauro C."/>
            <person name="Purnelle B."/>
            <person name="Masuy D."/>
            <person name="de Haan M."/>
            <person name="Maarse A.C."/>
            <person name="Alcaraz J.-P."/>
            <person name="Cottet A."/>
            <person name="Casacuberta E."/>
            <person name="Monfort A."/>
            <person name="Argiriou A."/>
            <person name="Flores M."/>
            <person name="Liguori R."/>
            <person name="Vitale D."/>
            <person name="Mannhaupt G."/>
            <person name="Haase D."/>
            <person name="Schoof H."/>
            <person name="Rudd S."/>
            <person name="Zaccaria P."/>
            <person name="Mewes H.-W."/>
            <person name="Mayer K.F.X."/>
            <person name="Kaul S."/>
            <person name="Town C.D."/>
            <person name="Koo H.L."/>
            <person name="Tallon L.J."/>
            <person name="Jenkins J."/>
            <person name="Rooney T."/>
            <person name="Rizzo M."/>
            <person name="Walts A."/>
            <person name="Utterback T."/>
            <person name="Fujii C.Y."/>
            <person name="Shea T.P."/>
            <person name="Creasy T.H."/>
            <person name="Haas B."/>
            <person name="Maiti R."/>
            <person name="Wu D."/>
            <person name="Peterson J."/>
            <person name="Van Aken S."/>
            <person name="Pai G."/>
            <person name="Militscher J."/>
            <person name="Sellers P."/>
            <person name="Gill J.E."/>
            <person name="Feldblyum T.V."/>
            <person name="Preuss D."/>
            <person name="Lin X."/>
            <person name="Nierman W.C."/>
            <person name="Salzberg S.L."/>
            <person name="White O."/>
            <person name="Venter J.C."/>
            <person name="Fraser C.M."/>
            <person name="Kaneko T."/>
            <person name="Nakamura Y."/>
            <person name="Sato S."/>
            <person name="Kato T."/>
            <person name="Asamizu E."/>
            <person name="Sasamoto S."/>
            <person name="Kimura T."/>
            <person name="Idesawa K."/>
            <person name="Kawashima K."/>
            <person name="Kishida Y."/>
            <person name="Kiyokawa C."/>
            <person name="Kohara M."/>
            <person name="Matsumoto M."/>
            <person name="Matsuno A."/>
            <person name="Muraki A."/>
            <person name="Nakayama S."/>
            <person name="Nakazaki N."/>
            <person name="Shinpo S."/>
            <person name="Takeuchi C."/>
            <person name="Wada T."/>
            <person name="Watanabe A."/>
            <person name="Yamada M."/>
            <person name="Yasuda M."/>
            <person name="Tabata S."/>
        </authorList>
    </citation>
    <scope>NUCLEOTIDE SEQUENCE [LARGE SCALE GENOMIC DNA]</scope>
    <source>
        <strain>cv. Columbia</strain>
    </source>
</reference>
<reference key="3">
    <citation type="journal article" date="2017" name="Plant J.">
        <title>Araport11: a complete reannotation of the Arabidopsis thaliana reference genome.</title>
        <authorList>
            <person name="Cheng C.Y."/>
            <person name="Krishnakumar V."/>
            <person name="Chan A.P."/>
            <person name="Thibaud-Nissen F."/>
            <person name="Schobel S."/>
            <person name="Town C.D."/>
        </authorList>
    </citation>
    <scope>GENOME REANNOTATION</scope>
    <source>
        <strain>cv. Columbia</strain>
    </source>
</reference>
<reference key="4">
    <citation type="journal article" date="2003" name="Science">
        <title>Empirical analysis of transcriptional activity in the Arabidopsis genome.</title>
        <authorList>
            <person name="Yamada K."/>
            <person name="Lim J."/>
            <person name="Dale J.M."/>
            <person name="Chen H."/>
            <person name="Shinn P."/>
            <person name="Palm C.J."/>
            <person name="Southwick A.M."/>
            <person name="Wu H.C."/>
            <person name="Kim C.J."/>
            <person name="Nguyen M."/>
            <person name="Pham P.K."/>
            <person name="Cheuk R.F."/>
            <person name="Karlin-Newmann G."/>
            <person name="Liu S.X."/>
            <person name="Lam B."/>
            <person name="Sakano H."/>
            <person name="Wu T."/>
            <person name="Yu G."/>
            <person name="Miranda M."/>
            <person name="Quach H.L."/>
            <person name="Tripp M."/>
            <person name="Chang C.H."/>
            <person name="Lee J.M."/>
            <person name="Toriumi M.J."/>
            <person name="Chan M.M."/>
            <person name="Tang C.C."/>
            <person name="Onodera C.S."/>
            <person name="Deng J.M."/>
            <person name="Akiyama K."/>
            <person name="Ansari Y."/>
            <person name="Arakawa T."/>
            <person name="Banh J."/>
            <person name="Banno F."/>
            <person name="Bowser L."/>
            <person name="Brooks S.Y."/>
            <person name="Carninci P."/>
            <person name="Chao Q."/>
            <person name="Choy N."/>
            <person name="Enju A."/>
            <person name="Goldsmith A.D."/>
            <person name="Gurjal M."/>
            <person name="Hansen N.F."/>
            <person name="Hayashizaki Y."/>
            <person name="Johnson-Hopson C."/>
            <person name="Hsuan V.W."/>
            <person name="Iida K."/>
            <person name="Karnes M."/>
            <person name="Khan S."/>
            <person name="Koesema E."/>
            <person name="Ishida J."/>
            <person name="Jiang P.X."/>
            <person name="Jones T."/>
            <person name="Kawai J."/>
            <person name="Kamiya A."/>
            <person name="Meyers C."/>
            <person name="Nakajima M."/>
            <person name="Narusaka M."/>
            <person name="Seki M."/>
            <person name="Sakurai T."/>
            <person name="Satou M."/>
            <person name="Tamse R."/>
            <person name="Vaysberg M."/>
            <person name="Wallender E.K."/>
            <person name="Wong C."/>
            <person name="Yamamura Y."/>
            <person name="Yuan S."/>
            <person name="Shinozaki K."/>
            <person name="Davis R.W."/>
            <person name="Theologis A."/>
            <person name="Ecker J.R."/>
        </authorList>
    </citation>
    <scope>NUCLEOTIDE SEQUENCE [LARGE SCALE MRNA]</scope>
    <source>
        <strain>cv. Columbia</strain>
    </source>
</reference>
<reference key="5">
    <citation type="journal article" date="2007" name="Cell Biol. Int.">
        <title>Cloning and characterization of Rab escort protein (REP) from Arabidopsis thaliana.</title>
        <authorList>
            <person name="Wojtas M."/>
            <person name="Swiezewski S."/>
            <person name="Sarnowski T.J."/>
            <person name="Plochocka D."/>
            <person name="Chelstowska A."/>
            <person name="Tolmachova T."/>
            <person name="Swiezewska E."/>
        </authorList>
    </citation>
    <scope>FUNCTION</scope>
    <scope>TISSUE SPECIFICITY</scope>
</reference>
<reference key="6">
    <citation type="journal article" date="2016" name="J. Biol. Chem.">
        <title>Arabidopsis Rab geranylgeranyltransferases demonstrate redundancy and broad substrate specificity in vitro.</title>
        <authorList>
            <person name="Shi W."/>
            <person name="Zeng Q."/>
            <person name="Kunkel B.N."/>
            <person name="Running M.P."/>
        </authorList>
    </citation>
    <scope>SUBUNIT</scope>
</reference>
<feature type="chain" id="PRO_0000436613" description="Rab escort protein 1">
    <location>
        <begin position="1"/>
        <end position="563"/>
    </location>
</feature>
<feature type="region of interest" description="Disordered" evidence="1">
    <location>
        <begin position="538"/>
        <end position="563"/>
    </location>
</feature>
<feature type="compositionally biased region" description="Acidic residues" evidence="1">
    <location>
        <begin position="550"/>
        <end position="563"/>
    </location>
</feature>
<feature type="sequence conflict" description="In Ref. 4; AAM19852/AAN33212." evidence="6" ref="4">
    <original>S</original>
    <variation>N</variation>
    <location>
        <position position="372"/>
    </location>
</feature>
<accession>Q8LLD4</accession>
<accession>Q8LPP8</accession>
<accession>Q9C8Z5</accession>